<organism>
    <name type="scientific">Shewanella baltica (strain OS185)</name>
    <dbReference type="NCBI Taxonomy" id="402882"/>
    <lineage>
        <taxon>Bacteria</taxon>
        <taxon>Pseudomonadati</taxon>
        <taxon>Pseudomonadota</taxon>
        <taxon>Gammaproteobacteria</taxon>
        <taxon>Alteromonadales</taxon>
        <taxon>Shewanellaceae</taxon>
        <taxon>Shewanella</taxon>
    </lineage>
</organism>
<accession>A6WHR9</accession>
<dbReference type="EMBL" id="CP000753">
    <property type="protein sequence ID" value="ABS06358.1"/>
    <property type="molecule type" value="Genomic_DNA"/>
</dbReference>
<dbReference type="RefSeq" id="WP_006083609.1">
    <property type="nucleotide sequence ID" value="NC_009665.1"/>
</dbReference>
<dbReference type="GeneID" id="67441751"/>
<dbReference type="KEGG" id="sbm:Shew185_0187"/>
<dbReference type="HOGENOM" id="CLU_092227_0_2_6"/>
<dbReference type="GO" id="GO:0015934">
    <property type="term" value="C:large ribosomal subunit"/>
    <property type="evidence" value="ECO:0007669"/>
    <property type="project" value="InterPro"/>
</dbReference>
<dbReference type="GO" id="GO:0070180">
    <property type="term" value="F:large ribosomal subunit rRNA binding"/>
    <property type="evidence" value="ECO:0007669"/>
    <property type="project" value="UniProtKB-UniRule"/>
</dbReference>
<dbReference type="GO" id="GO:0003735">
    <property type="term" value="F:structural constituent of ribosome"/>
    <property type="evidence" value="ECO:0007669"/>
    <property type="project" value="InterPro"/>
</dbReference>
<dbReference type="GO" id="GO:0006412">
    <property type="term" value="P:translation"/>
    <property type="evidence" value="ECO:0007669"/>
    <property type="project" value="UniProtKB-UniRule"/>
</dbReference>
<dbReference type="CDD" id="cd05797">
    <property type="entry name" value="Ribosomal_L10"/>
    <property type="match status" value="1"/>
</dbReference>
<dbReference type="FunFam" id="3.30.70.1730:FF:000001">
    <property type="entry name" value="50S ribosomal protein L10"/>
    <property type="match status" value="1"/>
</dbReference>
<dbReference type="Gene3D" id="3.30.70.1730">
    <property type="match status" value="1"/>
</dbReference>
<dbReference type="Gene3D" id="6.10.250.2350">
    <property type="match status" value="1"/>
</dbReference>
<dbReference type="HAMAP" id="MF_00362">
    <property type="entry name" value="Ribosomal_uL10"/>
    <property type="match status" value="1"/>
</dbReference>
<dbReference type="InterPro" id="IPR001790">
    <property type="entry name" value="Ribosomal_uL10"/>
</dbReference>
<dbReference type="InterPro" id="IPR043141">
    <property type="entry name" value="Ribosomal_uL10-like_sf"/>
</dbReference>
<dbReference type="InterPro" id="IPR022973">
    <property type="entry name" value="Ribosomal_uL10_bac"/>
</dbReference>
<dbReference type="InterPro" id="IPR047865">
    <property type="entry name" value="Ribosomal_uL10_bac_type"/>
</dbReference>
<dbReference type="InterPro" id="IPR002363">
    <property type="entry name" value="Ribosomal_uL10_CS_bac"/>
</dbReference>
<dbReference type="NCBIfam" id="NF000955">
    <property type="entry name" value="PRK00099.1-1"/>
    <property type="match status" value="1"/>
</dbReference>
<dbReference type="PANTHER" id="PTHR11560">
    <property type="entry name" value="39S RIBOSOMAL PROTEIN L10, MITOCHONDRIAL"/>
    <property type="match status" value="1"/>
</dbReference>
<dbReference type="Pfam" id="PF00466">
    <property type="entry name" value="Ribosomal_L10"/>
    <property type="match status" value="1"/>
</dbReference>
<dbReference type="SUPFAM" id="SSF160369">
    <property type="entry name" value="Ribosomal protein L10-like"/>
    <property type="match status" value="1"/>
</dbReference>
<dbReference type="PROSITE" id="PS01109">
    <property type="entry name" value="RIBOSOMAL_L10"/>
    <property type="match status" value="1"/>
</dbReference>
<evidence type="ECO:0000255" key="1">
    <source>
        <dbReference type="HAMAP-Rule" id="MF_00362"/>
    </source>
</evidence>
<evidence type="ECO:0000305" key="2"/>
<name>RL10_SHEB8</name>
<sequence>MALRLEDKKAIVAEVNEAAKGALSAVAADSRGVTVGAMTGLRKKAREAGVYVRVVRNTLARRAVEGTAFECLAETFTGPTLIAFSLEHPGAAARLLKDFAKEQANFEVKGAAFEGNFIPAAEIDRLAKLPTYEEALAQLMMTMKEASAGKFVRTLAALRDQKQEAA</sequence>
<reference key="1">
    <citation type="submission" date="2007-07" db="EMBL/GenBank/DDBJ databases">
        <title>Complete sequence of chromosome of Shewanella baltica OS185.</title>
        <authorList>
            <consortium name="US DOE Joint Genome Institute"/>
            <person name="Copeland A."/>
            <person name="Lucas S."/>
            <person name="Lapidus A."/>
            <person name="Barry K."/>
            <person name="Glavina del Rio T."/>
            <person name="Dalin E."/>
            <person name="Tice H."/>
            <person name="Pitluck S."/>
            <person name="Sims D."/>
            <person name="Brettin T."/>
            <person name="Bruce D."/>
            <person name="Detter J.C."/>
            <person name="Han C."/>
            <person name="Schmutz J."/>
            <person name="Larimer F."/>
            <person name="Land M."/>
            <person name="Hauser L."/>
            <person name="Kyrpides N."/>
            <person name="Mikhailova N."/>
            <person name="Brettar I."/>
            <person name="Rodrigues J."/>
            <person name="Konstantinidis K."/>
            <person name="Tiedje J."/>
            <person name="Richardson P."/>
        </authorList>
    </citation>
    <scope>NUCLEOTIDE SEQUENCE [LARGE SCALE GENOMIC DNA]</scope>
    <source>
        <strain>OS185</strain>
    </source>
</reference>
<protein>
    <recommendedName>
        <fullName evidence="1">Large ribosomal subunit protein uL10</fullName>
    </recommendedName>
    <alternativeName>
        <fullName evidence="2">50S ribosomal protein L10</fullName>
    </alternativeName>
</protein>
<proteinExistence type="inferred from homology"/>
<comment type="function">
    <text evidence="1">Forms part of the ribosomal stalk, playing a central role in the interaction of the ribosome with GTP-bound translation factors.</text>
</comment>
<comment type="subunit">
    <text evidence="1">Part of the ribosomal stalk of the 50S ribosomal subunit. The N-terminus interacts with L11 and the large rRNA to form the base of the stalk. The C-terminus forms an elongated spine to which L12 dimers bind in a sequential fashion forming a multimeric L10(L12)X complex.</text>
</comment>
<comment type="similarity">
    <text evidence="1">Belongs to the universal ribosomal protein uL10 family.</text>
</comment>
<feature type="chain" id="PRO_1000005589" description="Large ribosomal subunit protein uL10">
    <location>
        <begin position="1"/>
        <end position="166"/>
    </location>
</feature>
<keyword id="KW-0687">Ribonucleoprotein</keyword>
<keyword id="KW-0689">Ribosomal protein</keyword>
<keyword id="KW-0694">RNA-binding</keyword>
<keyword id="KW-0699">rRNA-binding</keyword>
<gene>
    <name evidence="1" type="primary">rplJ</name>
    <name type="ordered locus">Shew185_0187</name>
</gene>